<reference key="1">
    <citation type="journal article" date="1991" name="J. Gen. Virol.">
        <title>Evolutionary relationships in the cucumoviruses: nucleotide sequence of tomato aspermy virus RNA 1.</title>
        <authorList>
            <person name="Bernal J.J."/>
            <person name="Moriones E."/>
            <person name="Garcia-Arenal F."/>
        </authorList>
    </citation>
    <scope>NUCLEOTIDE SEQUENCE [GENOMIC RNA]</scope>
    <source>
        <strain>V</strain>
    </source>
</reference>
<comment type="function">
    <text evidence="1">Involved in the virus replication. Contains a helicase domain and a methyltransferase domain. The methyltransferase domain is probably involved in viral RNA capping. Involved in the formation of ER membrane spherular invaginations in which RNA replication complexes form (By similarity).</text>
</comment>
<comment type="subunit">
    <text evidence="1">Interacts with RNA-directed RNA polymerase 2a.</text>
</comment>
<comment type="subcellular location">
    <subcellularLocation>
        <location evidence="1">Host endoplasmic reticulum membrane</location>
        <topology evidence="1">Peripheral membrane protein</topology>
    </subcellularLocation>
</comment>
<comment type="similarity">
    <text evidence="5">Belongs to the bromoviridae replication protein 1a family.</text>
</comment>
<keyword id="KW-0067">ATP-binding</keyword>
<keyword id="KW-0347">Helicase</keyword>
<keyword id="KW-1038">Host endoplasmic reticulum</keyword>
<keyword id="KW-1043">Host membrane</keyword>
<keyword id="KW-0378">Hydrolase</keyword>
<keyword id="KW-0472">Membrane</keyword>
<keyword id="KW-0489">Methyltransferase</keyword>
<keyword id="KW-0547">Nucleotide-binding</keyword>
<keyword id="KW-1185">Reference proteome</keyword>
<keyword id="KW-0808">Transferase</keyword>
<gene>
    <name type="ORF">ORF1a</name>
</gene>
<protein>
    <recommendedName>
        <fullName>Replication protein 1a</fullName>
    </recommendedName>
    <domain>
        <recommendedName>
            <fullName>ATP-dependent helicase</fullName>
            <ecNumber>3.6.4.-</ecNumber>
        </recommendedName>
    </domain>
    <domain>
        <recommendedName>
            <fullName>Methyltransferase</fullName>
            <ecNumber>2.1.1.-</ecNumber>
        </recommendedName>
    </domain>
</protein>
<feature type="chain" id="PRO_0000083266" description="Replication protein 1a">
    <location>
        <begin position="1"/>
        <end position="993"/>
    </location>
</feature>
<feature type="domain" description="Alphavirus-like MT" evidence="3">
    <location>
        <begin position="72"/>
        <end position="289"/>
    </location>
</feature>
<feature type="domain" description="(+)RNA virus helicase ATP-binding">
    <location>
        <begin position="682"/>
        <end position="838"/>
    </location>
</feature>
<feature type="domain" description="(+)RNA virus helicase C-terminal">
    <location>
        <begin position="839"/>
        <end position="993"/>
    </location>
</feature>
<feature type="region of interest" description="Methyltransferase">
    <location>
        <begin position="50"/>
        <end position="408"/>
    </location>
</feature>
<feature type="region of interest" description="Disordered" evidence="4">
    <location>
        <begin position="525"/>
        <end position="581"/>
    </location>
</feature>
<feature type="region of interest" description="ATP-dependent helicase">
    <location>
        <begin position="711"/>
        <end position="975"/>
    </location>
</feature>
<feature type="compositionally biased region" description="Acidic residues" evidence="4">
    <location>
        <begin position="542"/>
        <end position="552"/>
    </location>
</feature>
<feature type="compositionally biased region" description="Basic and acidic residues" evidence="4">
    <location>
        <begin position="553"/>
        <end position="562"/>
    </location>
</feature>
<feature type="compositionally biased region" description="Low complexity" evidence="4">
    <location>
        <begin position="564"/>
        <end position="576"/>
    </location>
</feature>
<feature type="binding site" evidence="2">
    <location>
        <begin position="714"/>
        <end position="721"/>
    </location>
    <ligand>
        <name>ATP</name>
        <dbReference type="ChEBI" id="CHEBI:30616"/>
    </ligand>
</feature>
<organismHost>
    <name type="scientific">Canna</name>
    <dbReference type="NCBI Taxonomy" id="4627"/>
</organismHost>
<organismHost>
    <name type="scientific">Chrysanthemum morifolium</name>
    <name type="common">Florist's daisy</name>
    <name type="synonym">Dendranthema grandiflorum</name>
    <dbReference type="NCBI Taxonomy" id="41568"/>
</organismHost>
<organismHost>
    <name type="scientific">Lilium</name>
    <dbReference type="NCBI Taxonomy" id="4688"/>
</organismHost>
<organismHost>
    <name type="scientific">Solanum lycopersicum</name>
    <name type="common">Tomato</name>
    <name type="synonym">Lycopersicon esculentum</name>
    <dbReference type="NCBI Taxonomy" id="4081"/>
</organismHost>
<dbReference type="EC" id="3.6.4.-"/>
<dbReference type="EC" id="2.1.1.-"/>
<dbReference type="EMBL" id="D10044">
    <property type="protein sequence ID" value="BAA00936.1"/>
    <property type="molecule type" value="Genomic_RNA"/>
</dbReference>
<dbReference type="PIR" id="JQ1370">
    <property type="entry name" value="P1VXTA"/>
</dbReference>
<dbReference type="RefSeq" id="NP_620760.1">
    <property type="nucleotide sequence ID" value="NC_003837.1"/>
</dbReference>
<dbReference type="SMR" id="P28931"/>
<dbReference type="KEGG" id="vg:962652"/>
<dbReference type="OrthoDB" id="1460at10239"/>
<dbReference type="Proteomes" id="UP000007399">
    <property type="component" value="Genome"/>
</dbReference>
<dbReference type="GO" id="GO:0044167">
    <property type="term" value="C:host cell endoplasmic reticulum membrane"/>
    <property type="evidence" value="ECO:0007669"/>
    <property type="project" value="UniProtKB-SubCell"/>
</dbReference>
<dbReference type="GO" id="GO:0016020">
    <property type="term" value="C:membrane"/>
    <property type="evidence" value="ECO:0007669"/>
    <property type="project" value="UniProtKB-KW"/>
</dbReference>
<dbReference type="GO" id="GO:0005524">
    <property type="term" value="F:ATP binding"/>
    <property type="evidence" value="ECO:0007669"/>
    <property type="project" value="UniProtKB-KW"/>
</dbReference>
<dbReference type="GO" id="GO:0004386">
    <property type="term" value="F:helicase activity"/>
    <property type="evidence" value="ECO:0007669"/>
    <property type="project" value="UniProtKB-KW"/>
</dbReference>
<dbReference type="GO" id="GO:0016817">
    <property type="term" value="F:hydrolase activity, acting on acid anhydrides"/>
    <property type="evidence" value="ECO:0007669"/>
    <property type="project" value="InterPro"/>
</dbReference>
<dbReference type="GO" id="GO:0008174">
    <property type="term" value="F:mRNA methyltransferase activity"/>
    <property type="evidence" value="ECO:0007669"/>
    <property type="project" value="InterPro"/>
</dbReference>
<dbReference type="GO" id="GO:0003723">
    <property type="term" value="F:RNA binding"/>
    <property type="evidence" value="ECO:0007669"/>
    <property type="project" value="InterPro"/>
</dbReference>
<dbReference type="GO" id="GO:0032259">
    <property type="term" value="P:methylation"/>
    <property type="evidence" value="ECO:0007669"/>
    <property type="project" value="UniProtKB-KW"/>
</dbReference>
<dbReference type="GO" id="GO:0016556">
    <property type="term" value="P:mRNA modification"/>
    <property type="evidence" value="ECO:0007669"/>
    <property type="project" value="InterPro"/>
</dbReference>
<dbReference type="GO" id="GO:0006396">
    <property type="term" value="P:RNA processing"/>
    <property type="evidence" value="ECO:0007669"/>
    <property type="project" value="InterPro"/>
</dbReference>
<dbReference type="Gene3D" id="3.40.50.300">
    <property type="entry name" value="P-loop containing nucleotide triphosphate hydrolases"/>
    <property type="match status" value="2"/>
</dbReference>
<dbReference type="InterPro" id="IPR027351">
    <property type="entry name" value="(+)RNA_virus_helicase_core_dom"/>
</dbReference>
<dbReference type="InterPro" id="IPR021002">
    <property type="entry name" value="1a_necrotic_phenotyp-det_dom"/>
</dbReference>
<dbReference type="InterPro" id="IPR002588">
    <property type="entry name" value="Alphavirus-like_MT_dom"/>
</dbReference>
<dbReference type="InterPro" id="IPR022184">
    <property type="entry name" value="CMV_1a_C"/>
</dbReference>
<dbReference type="InterPro" id="IPR027417">
    <property type="entry name" value="P-loop_NTPase"/>
</dbReference>
<dbReference type="Pfam" id="PF12467">
    <property type="entry name" value="CMV_1a"/>
    <property type="match status" value="1"/>
</dbReference>
<dbReference type="Pfam" id="PF12503">
    <property type="entry name" value="CMV_1a_C"/>
    <property type="match status" value="1"/>
</dbReference>
<dbReference type="Pfam" id="PF01443">
    <property type="entry name" value="Viral_helicase1"/>
    <property type="match status" value="1"/>
</dbReference>
<dbReference type="Pfam" id="PF01660">
    <property type="entry name" value="Vmethyltransf"/>
    <property type="match status" value="1"/>
</dbReference>
<dbReference type="SUPFAM" id="SSF52540">
    <property type="entry name" value="P-loop containing nucleoside triphosphate hydrolases"/>
    <property type="match status" value="1"/>
</dbReference>
<dbReference type="PROSITE" id="PS51743">
    <property type="entry name" value="ALPHAVIRUS_MT"/>
    <property type="match status" value="1"/>
</dbReference>
<dbReference type="PROSITE" id="PS51657">
    <property type="entry name" value="PSRV_HELICASE"/>
    <property type="match status" value="1"/>
</dbReference>
<proteinExistence type="inferred from homology"/>
<accession>P28931</accession>
<sequence>MAASAFNIHKLVASHGDKGLLASALVDKLAHEQLEEQVQHQRRGLKVYIRNALDVKDSEIIRDRYGGKYDLHLTQQEQAPHGLAGALRLCELLDCLDSFPRTGLRQDLVLDFGGSWVTHYLRGHNVHCCSPCLGIRDKMRHTERLMTMRKVIVNDPDTFESRVPDFCTLPAEDCKVQAHFVISIHGGYDMGFKGLCRAMHAHGTTFLKGTMMFDGAMLFDTEGYLADLKCKWKKIKPRTYESEDQTPLLSRISDNLTTTIKDHTLIAFDFVDESTLSYVHKWENVKSFLTDQTYSYKGMTYGLERCLIQHGIMTYKIIAVPGTCPPELIRHCIWFTSLKDYVGLKIPVSQDLVEWKTVRILISTLRETEEIAMRCYSDKKNWLEQFKVILGVLSSKSSTIVINGMAMQAGERIDTSDYHYIGLAILLHTRMKYEQLGRMYDMWNSTFIRKFFASLTRPMRVFLSACVKTLFPTLRPRDEKEFLVKLSTFVTFNEVCQVDLDAEWDVISSAAFTAEMAVEDGKRLAEDRKQKAEAASQIPVDEIPDDTAESSDDTPREADTNQKSEPSSPELETLSTQTRSPITRLAQRASSMLEYSAYEAQLHDNAVSNLDRMWCMAGGDKKNNRLESNVKFVFETYHIVDPLVNVHFPTGRWLYRVPEGISYSVGFNEHGIGPKADGELYIVNADCVISNSKCLADTTLQYLAPTGTISLVDGVAGCGKTTAIKKMFNPATDVIVTANKKSALDVRQALFNCTDSKEATTFVRTADSILMNDTNEVQRVLVDEVVLLHFGQLCAVMSKLKAVRAICFGDSEQIAFCSRDASFDMRHSTIIPDETDTADTTFRSPQDVIKVVKCMASKALKKGTHSKYASWVSQSKVQRSVSSKAVASVTMVDLTEDRFYITMTQADKTALRTRARELNMSNDFIEHRIKTTHESQGVSEDHVTLVRLKTTKCDLFKAFKYCLVAVTRHKKTFRYEHVGKLDGDLIAECLARV</sequence>
<evidence type="ECO:0000250" key="1"/>
<evidence type="ECO:0000255" key="2"/>
<evidence type="ECO:0000255" key="3">
    <source>
        <dbReference type="PROSITE-ProRule" id="PRU01079"/>
    </source>
</evidence>
<evidence type="ECO:0000256" key="4">
    <source>
        <dbReference type="SAM" id="MobiDB-lite"/>
    </source>
</evidence>
<evidence type="ECO:0000305" key="5"/>
<organism>
    <name type="scientific">Tomato aspermy virus</name>
    <name type="common">TAV</name>
    <dbReference type="NCBI Taxonomy" id="12315"/>
    <lineage>
        <taxon>Viruses</taxon>
        <taxon>Riboviria</taxon>
        <taxon>Orthornavirae</taxon>
        <taxon>Kitrinoviricota</taxon>
        <taxon>Alsuviricetes</taxon>
        <taxon>Martellivirales</taxon>
        <taxon>Bromoviridae</taxon>
        <taxon>Cucumovirus</taxon>
    </lineage>
</organism>
<name>1A_TAV</name>